<protein>
    <recommendedName>
        <fullName evidence="1">HPr kinase/phosphorylase</fullName>
        <shortName evidence="1">HPrK/P</shortName>
        <ecNumber evidence="1">2.7.11.-</ecNumber>
        <ecNumber evidence="1">2.7.4.-</ecNumber>
    </recommendedName>
    <alternativeName>
        <fullName evidence="1">HPr(Ser) kinase/phosphorylase</fullName>
    </alternativeName>
</protein>
<comment type="function">
    <text evidence="1">Catalyzes the ATP- as well as the pyrophosphate-dependent phosphorylation of a specific serine residue in HPr, a phosphocarrier protein of the phosphoenolpyruvate-dependent sugar phosphotransferase system (PTS). HprK/P also catalyzes the pyrophosphate-producing, inorganic phosphate-dependent dephosphorylation (phosphorolysis) of seryl-phosphorylated HPr (P-Ser-HPr). The two antagonistic activities of HprK/P are regulated by several intracellular metabolites, which change their concentration in response to the absence or presence of rapidly metabolisable carbon sources (glucose, fructose, etc.) in the growth medium. Also phosphorylates/dephosphorylates the HPr-like catabolite repression protein crh on a specific serine residue. Therefore, by controlling the phosphorylation state of HPr and crh, HPrK/P is a sensor enzyme that plays a major role in the regulation of carbon metabolism and sugar transport: it mediates carbon catabolite repression (CCR), and regulates PTS-catalyzed carbohydrate uptake and inducer exclusion.</text>
</comment>
<comment type="catalytic activity">
    <reaction evidence="1">
        <text>[HPr protein]-L-serine + ATP = [HPr protein]-O-phospho-L-serine + ADP + H(+)</text>
        <dbReference type="Rhea" id="RHEA:46600"/>
        <dbReference type="Rhea" id="RHEA-COMP:11602"/>
        <dbReference type="Rhea" id="RHEA-COMP:11603"/>
        <dbReference type="ChEBI" id="CHEBI:15378"/>
        <dbReference type="ChEBI" id="CHEBI:29999"/>
        <dbReference type="ChEBI" id="CHEBI:30616"/>
        <dbReference type="ChEBI" id="CHEBI:83421"/>
        <dbReference type="ChEBI" id="CHEBI:456216"/>
    </reaction>
</comment>
<comment type="catalytic activity">
    <reaction evidence="1">
        <text>[HPr protein]-O-phospho-L-serine + phosphate + H(+) = [HPr protein]-L-serine + diphosphate</text>
        <dbReference type="Rhea" id="RHEA:46604"/>
        <dbReference type="Rhea" id="RHEA-COMP:11602"/>
        <dbReference type="Rhea" id="RHEA-COMP:11603"/>
        <dbReference type="ChEBI" id="CHEBI:15378"/>
        <dbReference type="ChEBI" id="CHEBI:29999"/>
        <dbReference type="ChEBI" id="CHEBI:33019"/>
        <dbReference type="ChEBI" id="CHEBI:43474"/>
        <dbReference type="ChEBI" id="CHEBI:83421"/>
    </reaction>
</comment>
<comment type="cofactor">
    <cofactor evidence="1">
        <name>Mg(2+)</name>
        <dbReference type="ChEBI" id="CHEBI:18420"/>
    </cofactor>
</comment>
<comment type="subunit">
    <text evidence="1">Homohexamer.</text>
</comment>
<comment type="domain">
    <text evidence="1">The Walker A ATP-binding motif also binds Pi and PPi.</text>
</comment>
<comment type="miscellaneous">
    <text evidence="1">Both phosphorylation and phosphorolysis are carried out by the same active site and suggest a common mechanism for both reactions.</text>
</comment>
<comment type="similarity">
    <text evidence="1">Belongs to the HPrK/P family.</text>
</comment>
<name>HPRK_SHOC1</name>
<sequence>MAKVTANDLLEKFQFELLAGEEGIYRPITTSDISRPGIEMAGFFTYYPARRLQLIGRTELSFLKSLSDQEKEERMTKLCTYDTPGIILSRGLEAPEQLIAAADKRGVPVLRSTLTTTQLSSRVTNFLESELAPVTAVHGVLVDIYGIGVLITGGSGVGKSETALDLVRRGHRLVADDSVEIRQQNEDTLVGYPPPLLQHLLEIRGLGIINVMTLFGAGAVRPFKRISLCMNLELWDQTKAYDRLGLEEDKMKIFDTEITKMTVPVRPGRNLAVIIEVAAMNFRLKRLGFNAAQEFSERLTQVIEHGENEF</sequence>
<dbReference type="EC" id="2.7.11.-" evidence="1"/>
<dbReference type="EC" id="2.7.4.-" evidence="1"/>
<dbReference type="EMBL" id="AP006627">
    <property type="protein sequence ID" value="BAD65589.1"/>
    <property type="molecule type" value="Genomic_DNA"/>
</dbReference>
<dbReference type="RefSeq" id="WP_011247897.1">
    <property type="nucleotide sequence ID" value="NC_006582.1"/>
</dbReference>
<dbReference type="SMR" id="Q5WDH1"/>
<dbReference type="STRING" id="66692.ABC3055"/>
<dbReference type="KEGG" id="bcl:ABC3055"/>
<dbReference type="eggNOG" id="COG1493">
    <property type="taxonomic scope" value="Bacteria"/>
</dbReference>
<dbReference type="HOGENOM" id="CLU_052030_0_1_9"/>
<dbReference type="OrthoDB" id="9778803at2"/>
<dbReference type="Proteomes" id="UP000001168">
    <property type="component" value="Chromosome"/>
</dbReference>
<dbReference type="GO" id="GO:0005524">
    <property type="term" value="F:ATP binding"/>
    <property type="evidence" value="ECO:0007669"/>
    <property type="project" value="UniProtKB-UniRule"/>
</dbReference>
<dbReference type="GO" id="GO:0000287">
    <property type="term" value="F:magnesium ion binding"/>
    <property type="evidence" value="ECO:0007669"/>
    <property type="project" value="UniProtKB-UniRule"/>
</dbReference>
<dbReference type="GO" id="GO:0000155">
    <property type="term" value="F:phosphorelay sensor kinase activity"/>
    <property type="evidence" value="ECO:0007669"/>
    <property type="project" value="InterPro"/>
</dbReference>
<dbReference type="GO" id="GO:0004674">
    <property type="term" value="F:protein serine/threonine kinase activity"/>
    <property type="evidence" value="ECO:0007669"/>
    <property type="project" value="UniProtKB-KW"/>
</dbReference>
<dbReference type="GO" id="GO:0004712">
    <property type="term" value="F:protein serine/threonine/tyrosine kinase activity"/>
    <property type="evidence" value="ECO:0007669"/>
    <property type="project" value="UniProtKB-UniRule"/>
</dbReference>
<dbReference type="GO" id="GO:0006109">
    <property type="term" value="P:regulation of carbohydrate metabolic process"/>
    <property type="evidence" value="ECO:0007669"/>
    <property type="project" value="UniProtKB-UniRule"/>
</dbReference>
<dbReference type="CDD" id="cd01918">
    <property type="entry name" value="HprK_C"/>
    <property type="match status" value="1"/>
</dbReference>
<dbReference type="FunFam" id="3.40.1390.20:FF:000002">
    <property type="entry name" value="HPr kinase/phosphorylase"/>
    <property type="match status" value="1"/>
</dbReference>
<dbReference type="FunFam" id="3.40.50.300:FF:000174">
    <property type="entry name" value="HPr kinase/phosphorylase"/>
    <property type="match status" value="1"/>
</dbReference>
<dbReference type="Gene3D" id="3.40.1390.20">
    <property type="entry name" value="HprK N-terminal domain-like"/>
    <property type="match status" value="1"/>
</dbReference>
<dbReference type="Gene3D" id="3.40.50.300">
    <property type="entry name" value="P-loop containing nucleotide triphosphate hydrolases"/>
    <property type="match status" value="1"/>
</dbReference>
<dbReference type="HAMAP" id="MF_01249">
    <property type="entry name" value="HPr_kinase"/>
    <property type="match status" value="1"/>
</dbReference>
<dbReference type="InterPro" id="IPR003755">
    <property type="entry name" value="HPr(Ser)_kin/Pase"/>
</dbReference>
<dbReference type="InterPro" id="IPR011104">
    <property type="entry name" value="Hpr_kin/Pase_C"/>
</dbReference>
<dbReference type="InterPro" id="IPR011126">
    <property type="entry name" value="Hpr_kin/Pase_Hpr_N"/>
</dbReference>
<dbReference type="InterPro" id="IPR027417">
    <property type="entry name" value="P-loop_NTPase"/>
</dbReference>
<dbReference type="InterPro" id="IPR028979">
    <property type="entry name" value="Ser_kin/Pase_Hpr-like_N_sf"/>
</dbReference>
<dbReference type="NCBIfam" id="TIGR00679">
    <property type="entry name" value="hpr-ser"/>
    <property type="match status" value="1"/>
</dbReference>
<dbReference type="PANTHER" id="PTHR30305:SF1">
    <property type="entry name" value="HPR KINASE_PHOSPHORYLASE"/>
    <property type="match status" value="1"/>
</dbReference>
<dbReference type="PANTHER" id="PTHR30305">
    <property type="entry name" value="PROTEIN YJDM-RELATED"/>
    <property type="match status" value="1"/>
</dbReference>
<dbReference type="Pfam" id="PF07475">
    <property type="entry name" value="Hpr_kinase_C"/>
    <property type="match status" value="1"/>
</dbReference>
<dbReference type="Pfam" id="PF02603">
    <property type="entry name" value="Hpr_kinase_N"/>
    <property type="match status" value="1"/>
</dbReference>
<dbReference type="SUPFAM" id="SSF75138">
    <property type="entry name" value="HprK N-terminal domain-like"/>
    <property type="match status" value="1"/>
</dbReference>
<dbReference type="SUPFAM" id="SSF53795">
    <property type="entry name" value="PEP carboxykinase-like"/>
    <property type="match status" value="1"/>
</dbReference>
<accession>Q5WDH1</accession>
<proteinExistence type="inferred from homology"/>
<gene>
    <name evidence="1" type="primary">hprK</name>
    <name type="ordered locus">ABC3055</name>
</gene>
<keyword id="KW-0067">ATP-binding</keyword>
<keyword id="KW-0119">Carbohydrate metabolism</keyword>
<keyword id="KW-0418">Kinase</keyword>
<keyword id="KW-0460">Magnesium</keyword>
<keyword id="KW-0479">Metal-binding</keyword>
<keyword id="KW-0511">Multifunctional enzyme</keyword>
<keyword id="KW-0547">Nucleotide-binding</keyword>
<keyword id="KW-1185">Reference proteome</keyword>
<keyword id="KW-0723">Serine/threonine-protein kinase</keyword>
<keyword id="KW-0808">Transferase</keyword>
<organism>
    <name type="scientific">Shouchella clausii (strain KSM-K16)</name>
    <name type="common">Alkalihalobacillus clausii</name>
    <dbReference type="NCBI Taxonomy" id="66692"/>
    <lineage>
        <taxon>Bacteria</taxon>
        <taxon>Bacillati</taxon>
        <taxon>Bacillota</taxon>
        <taxon>Bacilli</taxon>
        <taxon>Bacillales</taxon>
        <taxon>Bacillaceae</taxon>
        <taxon>Shouchella</taxon>
    </lineage>
</organism>
<reference key="1">
    <citation type="submission" date="2003-10" db="EMBL/GenBank/DDBJ databases">
        <title>The complete genome sequence of the alkaliphilic Bacillus clausii KSM-K16.</title>
        <authorList>
            <person name="Takaki Y."/>
            <person name="Kageyama Y."/>
            <person name="Shimamura S."/>
            <person name="Suzuki H."/>
            <person name="Nishi S."/>
            <person name="Hatada Y."/>
            <person name="Kawai S."/>
            <person name="Ito S."/>
            <person name="Horikoshi K."/>
        </authorList>
    </citation>
    <scope>NUCLEOTIDE SEQUENCE [LARGE SCALE GENOMIC DNA]</scope>
    <source>
        <strain>KSM-K16</strain>
    </source>
</reference>
<feature type="chain" id="PRO_1000067125" description="HPr kinase/phosphorylase">
    <location>
        <begin position="1"/>
        <end position="310"/>
    </location>
</feature>
<feature type="region of interest" description="Important for the catalytic mechanism of both phosphorylation and dephosphorylation" evidence="1">
    <location>
        <begin position="201"/>
        <end position="210"/>
    </location>
</feature>
<feature type="region of interest" description="Important for the catalytic mechanism of dephosphorylation" evidence="1">
    <location>
        <begin position="264"/>
        <end position="269"/>
    </location>
</feature>
<feature type="active site" evidence="1">
    <location>
        <position position="138"/>
    </location>
</feature>
<feature type="active site" evidence="1">
    <location>
        <position position="159"/>
    </location>
</feature>
<feature type="active site" description="Proton acceptor; for phosphorylation activity. Proton donor; for dephosphorylation activity" evidence="1">
    <location>
        <position position="177"/>
    </location>
</feature>
<feature type="active site" evidence="1">
    <location>
        <position position="243"/>
    </location>
</feature>
<feature type="binding site" evidence="1">
    <location>
        <begin position="153"/>
        <end position="160"/>
    </location>
    <ligand>
        <name>ATP</name>
        <dbReference type="ChEBI" id="CHEBI:30616"/>
    </ligand>
</feature>
<feature type="binding site" evidence="1">
    <location>
        <position position="160"/>
    </location>
    <ligand>
        <name>Mg(2+)</name>
        <dbReference type="ChEBI" id="CHEBI:18420"/>
    </ligand>
</feature>
<feature type="binding site" evidence="1">
    <location>
        <position position="202"/>
    </location>
    <ligand>
        <name>Mg(2+)</name>
        <dbReference type="ChEBI" id="CHEBI:18420"/>
    </ligand>
</feature>
<evidence type="ECO:0000255" key="1">
    <source>
        <dbReference type="HAMAP-Rule" id="MF_01249"/>
    </source>
</evidence>